<reference key="1">
    <citation type="submission" date="1994-01" db="EMBL/GenBank/DDBJ databases">
        <title>Near identity in the polymerase gene of two serologically distinct nodaviruses.</title>
        <authorList>
            <person name="Dasgupta R."/>
        </authorList>
    </citation>
    <scope>NUCLEOTIDE SEQUENCE [GENOMIC RNA]</scope>
</reference>
<reference key="2">
    <citation type="journal article" date="2002" name="J. Virol.">
        <title>Flock house virus RNA polymerase is a transmembrane protein with amino-terminal sequences sufficient for mitochondrial localization and membrane insertion.</title>
        <authorList>
            <person name="Miller D.J."/>
            <person name="Ahlquist P."/>
        </authorList>
    </citation>
    <scope>SUBCELLULAR LOCATION</scope>
    <scope>DOMAIN</scope>
    <scope>TOPOLOGY</scope>
</reference>
<reference key="3">
    <citation type="journal article" date="2007" name="J. Virol.">
        <title>Nodavirus RNA replication protein a induces membrane association of genomic RNA.</title>
        <authorList>
            <person name="Van Wynsberghe P.M."/>
            <person name="Chen H.R."/>
            <person name="Ahlquist P."/>
        </authorList>
    </citation>
    <scope>ACTIVE SITE</scope>
    <scope>MUTAGENESIS OF ASP-692</scope>
    <scope>FUNCTION</scope>
    <scope>ACTIVITY REGULATION</scope>
</reference>
<reference key="4">
    <citation type="journal article" date="2014" name="PLoS ONE">
        <title>Flock house virus RNA polymerase initiates RNA synthesis de novo and possesses a terminal nucleotidyl transferase activity.</title>
        <authorList>
            <person name="Wu W."/>
            <person name="Wang Z."/>
            <person name="Xia H."/>
            <person name="Liu Y."/>
            <person name="Qiu Y."/>
            <person name="Liu Y."/>
            <person name="Hu Y."/>
            <person name="Zhou X."/>
        </authorList>
    </citation>
    <scope>CATALYTIC ACTIVITY</scope>
    <scope>COFACTOR</scope>
    <scope>BIOPHYSICOCHEMICAL PROPERTIES</scope>
    <scope>MUTAGENESIS OF 692-ASP-ASP-693</scope>
</reference>
<reference key="5">
    <citation type="journal article" date="2018" name="Viruses">
        <title>The RNA Capping Enzyme Domain in Protein A is Essential for Flock House Virus Replication.</title>
        <authorList>
            <person name="Quirin T."/>
            <person name="Chen Y."/>
            <person name="Pietilae M.K."/>
            <person name="Guo D."/>
            <person name="Ahola T."/>
        </authorList>
    </citation>
    <scope>SUBCELLULAR LOCATION</scope>
    <scope>MUTAGENESIS OF HIS-93; ARG-100; ASP-141 AND TRP-215</scope>
    <scope>DOMAIN</scope>
</reference>
<reference key="6">
    <citation type="journal article" date="2020" name="Proc. Natl. Acad. Sci. U.S.A.">
        <title>Subdomain cryo-EM structure of nodaviral replication protein A crown complex provides mechanistic insights into RNA genome replication.</title>
        <authorList>
            <person name="Unchwaniwala N."/>
            <person name="Zhan H."/>
            <person name="Pennington J."/>
            <person name="Horswill M."/>
            <person name="den Boon J.A."/>
            <person name="Ahlquist P."/>
        </authorList>
    </citation>
    <scope>STRUCTURE BY ELECTRON MICROSCOPY (8.50 ANGSTROMS)</scope>
    <scope>FUNCTION</scope>
    <scope>SUBUNIT</scope>
</reference>
<reference key="7">
    <citation type="journal article" date="2022" name="Viruses">
        <title>Multifunctional protein A is the only viral protein required for Nodavirus RNA replication crown formation.</title>
        <authorList>
            <person name="den Boon J.A."/>
            <person name="Zhan H."/>
            <person name="Unchwaniwala N."/>
            <person name="Horswill M."/>
            <person name="Slavik K."/>
            <person name="Pennington J."/>
            <person name="Navine A."/>
            <person name="Ahlquist P."/>
        </authorList>
    </citation>
    <scope>FUNCTION</scope>
    <scope>INTERACTION WITH PROTEIN B2</scope>
</reference>
<reference key="8">
    <citation type="journal article" date="2023" name="Proc. Natl. Acad. Sci. U.S.A.">
        <title>Nodavirus RNA replication crown architecture reveals proto-crown precursor and viral protein A conformational switching.</title>
        <authorList>
            <person name="Zhan H."/>
            <person name="Unchwaniwala N."/>
            <person name="Rebolledo-Viveros A."/>
            <person name="Pennington J."/>
            <person name="Horswill M."/>
            <person name="Broadberry R."/>
            <person name="Myers J."/>
            <person name="den Boon J.A."/>
            <person name="Grant T."/>
            <person name="Ahlquist P."/>
        </authorList>
    </citation>
    <scope>STRUCTURE BY ELECTRON MICROSCOPY (3.10 ANGSTROMS)</scope>
    <scope>SUBUNIT</scope>
    <scope>SUBCELLULAR LOCATION</scope>
    <scope>FUNCTION</scope>
</reference>
<organismHost>
    <name type="scientific">Costelytra zealandica</name>
    <dbReference type="NCBI Taxonomy" id="50579"/>
</organismHost>
<organismHost>
    <name type="scientific">Galleria mellonella</name>
    <name type="common">Greater wax moth</name>
    <dbReference type="NCBI Taxonomy" id="7137"/>
</organismHost>
<organismHost>
    <name type="scientific">Hordeum vulgare</name>
    <name type="common">Barley</name>
    <dbReference type="NCBI Taxonomy" id="4513"/>
</organismHost>
<organismHost>
    <name type="scientific">Saccharomyces cerevisiae</name>
    <name type="common">Baker's yeast</name>
    <dbReference type="NCBI Taxonomy" id="4932"/>
</organismHost>
<accession>Q66929</accession>
<name>RDRP_FHV</name>
<dbReference type="EC" id="2.7.7.48" evidence="4"/>
<dbReference type="EMBL" id="X77156">
    <property type="protein sequence ID" value="CAA54399.1"/>
    <property type="molecule type" value="Genomic_RNA"/>
</dbReference>
<dbReference type="PIR" id="S41397">
    <property type="entry name" value="S41397"/>
</dbReference>
<dbReference type="RefSeq" id="NP_689444.1">
    <property type="nucleotide sequence ID" value="NC_004146.1"/>
</dbReference>
<dbReference type="PDB" id="8FM9">
    <property type="method" value="EM"/>
    <property type="resolution" value="3.20 A"/>
    <property type="chains" value="A/B/C/D/E/F/G/H/I/J/K/L/M/N/O/P/Q/R/S/T/U/V/W/X=1-998"/>
</dbReference>
<dbReference type="PDB" id="8FMA">
    <property type="method" value="EM"/>
    <property type="resolution" value="3.10 A"/>
    <property type="chains" value="A/B/C/D/E/F/G/H/I/J/K/L/M/N/O/P/Q/R/S/T/U/V=1-998"/>
</dbReference>
<dbReference type="PDB" id="8FMB">
    <property type="method" value="EM"/>
    <property type="resolution" value="6.30 A"/>
    <property type="chains" value="A=1-998"/>
</dbReference>
<dbReference type="PDBsum" id="8FM9"/>
<dbReference type="PDBsum" id="8FMA"/>
<dbReference type="PDBsum" id="8FMB"/>
<dbReference type="EMDB" id="EMD-29289"/>
<dbReference type="EMDB" id="EMD-29290"/>
<dbReference type="EMDB" id="EMD-29291"/>
<dbReference type="SMR" id="Q66929"/>
<dbReference type="GeneID" id="962114"/>
<dbReference type="KEGG" id="vg:962114"/>
<dbReference type="OrthoDB" id="155at10239"/>
<dbReference type="Proteomes" id="UP000203899">
    <property type="component" value="Genome"/>
</dbReference>
<dbReference type="GO" id="GO:0044193">
    <property type="term" value="C:host cell mitochondrial outer membrane"/>
    <property type="evidence" value="ECO:0007669"/>
    <property type="project" value="UniProtKB-SubCell"/>
</dbReference>
<dbReference type="GO" id="GO:0016020">
    <property type="term" value="C:membrane"/>
    <property type="evidence" value="ECO:0007669"/>
    <property type="project" value="UniProtKB-KW"/>
</dbReference>
<dbReference type="GO" id="GO:0003968">
    <property type="term" value="F:RNA-directed RNA polymerase activity"/>
    <property type="evidence" value="ECO:0007669"/>
    <property type="project" value="UniProtKB-KW"/>
</dbReference>
<dbReference type="CDD" id="cd23173">
    <property type="entry name" value="ps-ssRNAv_Nodaviridae_RdRp"/>
    <property type="match status" value="1"/>
</dbReference>
<dbReference type="InterPro" id="IPR043502">
    <property type="entry name" value="DNA/RNA_pol_sf"/>
</dbReference>
<dbReference type="InterPro" id="IPR043647">
    <property type="entry name" value="Noda_Vmethyltr_dom"/>
</dbReference>
<dbReference type="Pfam" id="PF19222">
    <property type="entry name" value="Noda_Vmethyltr"/>
    <property type="match status" value="1"/>
</dbReference>
<dbReference type="SUPFAM" id="SSF56672">
    <property type="entry name" value="DNA/RNA polymerases"/>
    <property type="match status" value="1"/>
</dbReference>
<comment type="function">
    <text evidence="3 4 6 7 8 12">RNA-dependent RNA polymerase, which replicates the viral genome composed of 2 RNA segments, RNA1 and RNA2 (Probable). Does not need an exogenous primer (PubMed:24466277). Also possesses a terminal nucleotidyl transferase (TNTase) activity (PubMed:24466277). The TNTase catalyzes the addition of nucleotide to the 3'-end of plus- and minus-stranded RNAs, probably to repair the 3'-end nucleotide loss (PubMed:24466277). Forms the open necked connection to the cytosol of the virus-induced replication vesicles (PubMed:32690711, PubMed:36560715, PubMed:36693094). Mediates viral RNA1 recruitment (PubMed:17301137).</text>
</comment>
<comment type="catalytic activity">
    <reaction evidence="4">
        <text>RNA(n) + a ribonucleoside 5'-triphosphate = RNA(n+1) + diphosphate</text>
        <dbReference type="Rhea" id="RHEA:21248"/>
        <dbReference type="Rhea" id="RHEA-COMP:14527"/>
        <dbReference type="Rhea" id="RHEA-COMP:17342"/>
        <dbReference type="ChEBI" id="CHEBI:33019"/>
        <dbReference type="ChEBI" id="CHEBI:61557"/>
        <dbReference type="ChEBI" id="CHEBI:140395"/>
        <dbReference type="EC" id="2.7.7.48"/>
    </reaction>
    <physiologicalReaction direction="left-to-right" evidence="4">
        <dbReference type="Rhea" id="RHEA:21249"/>
    </physiologicalReaction>
</comment>
<comment type="cofactor">
    <cofactor evidence="4">
        <name>Mn(2+)</name>
        <dbReference type="ChEBI" id="CHEBI:29035"/>
    </cofactor>
    <text evidence="4">Highest RdRP activity at 1 mM Mn(2+).</text>
</comment>
<comment type="activity regulation">
    <text evidence="3">Drastically inhibited by phosphonoacetic acid. Only slightly inhibited by gliotoxin.</text>
</comment>
<comment type="biophysicochemical properties">
    <phDependence>
        <text evidence="4">Optimum pH is 8.0.</text>
    </phDependence>
    <temperatureDependence>
        <text evidence="4">Optimum temperature is 30 degrees Celsius.</text>
    </temperatureDependence>
</comment>
<comment type="subunit">
    <text evidence="6 7 8">Homododecamer (PubMed:32690711, PubMed:36693094). Forms 2 stacked rings of 35-nm in diameter, arranged in a crown-like structure at the opening of virus-induced replication vesicles (PubMed:36693094). Interacts with protein B2 (PubMed:36560715).</text>
</comment>
<comment type="subcellular location">
    <subcellularLocation>
        <location evidence="2 5 8">Host mitochondrion outer membrane</location>
        <topology evidence="2">Single-pass membrane protein</topology>
    </subcellularLocation>
    <text evidence="8">Part of the 30- to 90-nm invaginations of the host mitochondrial outer membrane that form the viral replication complexes vesicules. Has a N-terminal membrane-spanning mitochondrial anchor.</text>
</comment>
<comment type="domain">
    <text evidence="2 5 7">The N-terminus is important for both membrane association and mitochondrial localization (PubMed:12208963). It may also contain a RNA methyltransferase (MTase-GTase) capping domain (PubMed:30205593). The C-terminus contains the RNA-dependent RNA polymerase domain and a structurally disordered region at the very end (PubMed:36560715).</text>
</comment>
<comment type="miscellaneous">
    <text evidence="10">The viral bipartite genome is composed of RNA1 and RNA2.</text>
</comment>
<comment type="similarity">
    <text evidence="10">Belongs to the nodaviridae RNA polymerase family.</text>
</comment>
<feature type="chain" id="PRO_0000222446" description="RNA-directed RNA polymerase">
    <location>
        <begin position="1"/>
        <end position="998"/>
    </location>
</feature>
<feature type="transmembrane region" description="Helical" evidence="11">
    <location>
        <begin position="17"/>
        <end position="34"/>
    </location>
</feature>
<feature type="region of interest" description="Homomultimerization" evidence="9">
    <location>
        <begin position="1"/>
        <end position="400"/>
    </location>
</feature>
<feature type="region of interest" description="Interaction with host mitochondria outer membrane" evidence="8 11">
    <location>
        <begin position="1"/>
        <end position="67"/>
    </location>
</feature>
<feature type="region of interest" description="Cytoplasmic" evidence="2">
    <location>
        <begin position="35"/>
        <end position="998"/>
    </location>
</feature>
<feature type="region of interest" description="Capping" evidence="13">
    <location>
        <begin position="91"/>
        <end position="282"/>
    </location>
</feature>
<feature type="region of interest" description="Interaction with host mitochondria outer membrane" evidence="8">
    <location>
        <begin position="233"/>
        <end position="250"/>
    </location>
</feature>
<feature type="region of interest" description="Homomultimerization" evidence="9">
    <location>
        <begin position="700"/>
        <end position="800"/>
    </location>
</feature>
<feature type="region of interest" description="Disordered" evidence="1">
    <location>
        <begin position="901"/>
        <end position="998"/>
    </location>
</feature>
<feature type="compositionally biased region" description="Polar residues" evidence="1">
    <location>
        <begin position="904"/>
        <end position="913"/>
    </location>
</feature>
<feature type="compositionally biased region" description="Polar residues" evidence="1">
    <location>
        <begin position="947"/>
        <end position="961"/>
    </location>
</feature>
<feature type="compositionally biased region" description="Basic residues" evidence="1">
    <location>
        <begin position="971"/>
        <end position="984"/>
    </location>
</feature>
<feature type="active site" description="For RdRp/TNTase activity" evidence="3 4">
    <location>
        <position position="692"/>
    </location>
</feature>
<feature type="mutagenesis site" description="Complete loss of RNA replication." evidence="5">
    <original>H</original>
    <variation>A</variation>
    <location>
        <position position="93"/>
    </location>
</feature>
<feature type="mutagenesis site" description="Complete loss of RNA replication." evidence="5">
    <original>R</original>
    <variation>A</variation>
    <location>
        <position position="100"/>
    </location>
</feature>
<feature type="mutagenesis site" description="Complete loss of RNA replication." evidence="5">
    <original>D</original>
    <variation>A</variation>
    <location>
        <position position="141"/>
    </location>
</feature>
<feature type="mutagenesis site" description="Reduced RNA replication." evidence="5">
    <original>W</original>
    <variation>A</variation>
    <location>
        <position position="215"/>
    </location>
</feature>
<feature type="mutagenesis site" description="Complete loss of both TNTase and RdRP activities." evidence="4">
    <original>DD</original>
    <variation>AA</variation>
    <location>
        <begin position="692"/>
        <end position="693"/>
    </location>
</feature>
<feature type="mutagenesis site" description="Complete loss of RdRp ctivity." evidence="3">
    <original>D</original>
    <variation>E</variation>
    <location>
        <position position="692"/>
    </location>
</feature>
<feature type="helix" evidence="15">
    <location>
        <begin position="56"/>
        <end position="63"/>
    </location>
</feature>
<feature type="turn" evidence="15">
    <location>
        <begin position="78"/>
        <end position="80"/>
    </location>
</feature>
<feature type="strand" evidence="15">
    <location>
        <begin position="90"/>
        <end position="92"/>
    </location>
</feature>
<feature type="helix" evidence="15">
    <location>
        <begin position="96"/>
        <end position="114"/>
    </location>
</feature>
<feature type="strand" evidence="15">
    <location>
        <begin position="118"/>
        <end position="121"/>
    </location>
</feature>
<feature type="helix" evidence="15">
    <location>
        <begin position="146"/>
        <end position="148"/>
    </location>
</feature>
<feature type="strand" evidence="15">
    <location>
        <begin position="156"/>
        <end position="161"/>
    </location>
</feature>
<feature type="turn" evidence="15">
    <location>
        <begin position="163"/>
        <end position="165"/>
    </location>
</feature>
<feature type="helix" evidence="15">
    <location>
        <begin position="169"/>
        <end position="173"/>
    </location>
</feature>
<feature type="strand" evidence="15">
    <location>
        <begin position="179"/>
        <end position="184"/>
    </location>
</feature>
<feature type="strand" evidence="15">
    <location>
        <begin position="187"/>
        <end position="193"/>
    </location>
</feature>
<feature type="strand" evidence="15">
    <location>
        <begin position="196"/>
        <end position="198"/>
    </location>
</feature>
<feature type="strand" evidence="15">
    <location>
        <begin position="204"/>
        <end position="208"/>
    </location>
</feature>
<feature type="strand" evidence="14">
    <location>
        <begin position="210"/>
        <end position="212"/>
    </location>
</feature>
<feature type="strand" evidence="15">
    <location>
        <begin position="214"/>
        <end position="217"/>
    </location>
</feature>
<feature type="strand" evidence="15">
    <location>
        <begin position="223"/>
        <end position="225"/>
    </location>
</feature>
<feature type="strand" evidence="15">
    <location>
        <begin position="227"/>
        <end position="229"/>
    </location>
</feature>
<feature type="helix" evidence="15">
    <location>
        <begin position="237"/>
        <end position="249"/>
    </location>
</feature>
<feature type="strand" evidence="15">
    <location>
        <begin position="251"/>
        <end position="261"/>
    </location>
</feature>
<feature type="strand" evidence="15">
    <location>
        <begin position="265"/>
        <end position="267"/>
    </location>
</feature>
<feature type="strand" evidence="15">
    <location>
        <begin position="271"/>
        <end position="285"/>
    </location>
</feature>
<feature type="strand" evidence="15">
    <location>
        <begin position="305"/>
        <end position="307"/>
    </location>
</feature>
<feature type="strand" evidence="15">
    <location>
        <begin position="310"/>
        <end position="317"/>
    </location>
</feature>
<feature type="turn" evidence="15">
    <location>
        <begin position="318"/>
        <end position="320"/>
    </location>
</feature>
<feature type="strand" evidence="15">
    <location>
        <begin position="321"/>
        <end position="328"/>
    </location>
</feature>
<feature type="strand" evidence="15">
    <location>
        <begin position="335"/>
        <end position="338"/>
    </location>
</feature>
<feature type="helix" evidence="15">
    <location>
        <begin position="339"/>
        <end position="345"/>
    </location>
</feature>
<feature type="helix" evidence="15">
    <location>
        <begin position="351"/>
        <end position="361"/>
    </location>
</feature>
<feature type="helix" evidence="15">
    <location>
        <begin position="366"/>
        <end position="377"/>
    </location>
</feature>
<feature type="helix" evidence="15">
    <location>
        <begin position="454"/>
        <end position="468"/>
    </location>
</feature>
<feature type="helix" evidence="15">
    <location>
        <begin position="479"/>
        <end position="484"/>
    </location>
</feature>
<feature type="helix" evidence="15">
    <location>
        <begin position="535"/>
        <end position="548"/>
    </location>
</feature>
<feature type="turn" evidence="15">
    <location>
        <begin position="549"/>
        <end position="551"/>
    </location>
</feature>
<feature type="helix" evidence="15">
    <location>
        <begin position="553"/>
        <end position="555"/>
    </location>
</feature>
<feature type="turn" evidence="15">
    <location>
        <begin position="556"/>
        <end position="558"/>
    </location>
</feature>
<feature type="strand" evidence="15">
    <location>
        <begin position="561"/>
        <end position="563"/>
    </location>
</feature>
<feature type="helix" evidence="15">
    <location>
        <begin position="565"/>
        <end position="578"/>
    </location>
</feature>
<feature type="turn" evidence="15">
    <location>
        <begin position="579"/>
        <end position="581"/>
    </location>
</feature>
<feature type="strand" evidence="15">
    <location>
        <begin position="583"/>
        <end position="591"/>
    </location>
</feature>
<feature type="turn" evidence="15">
    <location>
        <begin position="592"/>
        <end position="594"/>
    </location>
</feature>
<feature type="helix" evidence="15">
    <location>
        <begin position="597"/>
        <end position="602"/>
    </location>
</feature>
<feature type="helix" evidence="15">
    <location>
        <begin position="604"/>
        <end position="611"/>
    </location>
</feature>
<feature type="helix" evidence="15">
    <location>
        <begin position="614"/>
        <end position="616"/>
    </location>
</feature>
<feature type="helix" evidence="15">
    <location>
        <begin position="617"/>
        <end position="628"/>
    </location>
</feature>
<feature type="helix" evidence="15">
    <location>
        <begin position="655"/>
        <end position="673"/>
    </location>
</feature>
<feature type="helix" evidence="15">
    <location>
        <begin position="679"/>
        <end position="683"/>
    </location>
</feature>
<feature type="strand" evidence="15">
    <location>
        <begin position="693"/>
        <end position="697"/>
    </location>
</feature>
<feature type="helix" evidence="15">
    <location>
        <begin position="698"/>
        <end position="700"/>
    </location>
</feature>
<feature type="helix" evidence="15">
    <location>
        <begin position="703"/>
        <end position="711"/>
    </location>
</feature>
<feature type="strand" evidence="15">
    <location>
        <begin position="715"/>
        <end position="719"/>
    </location>
</feature>
<feature type="turn" evidence="15">
    <location>
        <begin position="722"/>
        <end position="724"/>
    </location>
</feature>
<feature type="strand" evidence="15">
    <location>
        <begin position="725"/>
        <end position="728"/>
    </location>
</feature>
<feature type="strand" evidence="15">
    <location>
        <begin position="731"/>
        <end position="734"/>
    </location>
</feature>
<feature type="turn" evidence="15">
    <location>
        <begin position="736"/>
        <end position="738"/>
    </location>
</feature>
<feature type="strand" evidence="15">
    <location>
        <begin position="742"/>
        <end position="744"/>
    </location>
</feature>
<feature type="helix" evidence="15">
    <location>
        <begin position="746"/>
        <end position="750"/>
    </location>
</feature>
<feature type="turn" evidence="15">
    <location>
        <begin position="751"/>
        <end position="754"/>
    </location>
</feature>
<feature type="helix" evidence="15">
    <location>
        <begin position="764"/>
        <end position="779"/>
    </location>
</feature>
<feature type="turn" evidence="15">
    <location>
        <begin position="783"/>
        <end position="785"/>
    </location>
</feature>
<feature type="helix" evidence="15">
    <location>
        <begin position="786"/>
        <end position="799"/>
    </location>
</feature>
<feature type="helix" evidence="15">
    <location>
        <begin position="803"/>
        <end position="807"/>
    </location>
</feature>
<feature type="helix" evidence="15">
    <location>
        <begin position="810"/>
        <end position="813"/>
    </location>
</feature>
<feature type="helix" evidence="15">
    <location>
        <begin position="830"/>
        <end position="832"/>
    </location>
</feature>
<feature type="helix" evidence="15">
    <location>
        <begin position="833"/>
        <end position="844"/>
    </location>
</feature>
<feature type="helix" evidence="15">
    <location>
        <begin position="848"/>
        <end position="860"/>
    </location>
</feature>
<organism>
    <name type="scientific">Flock house virus</name>
    <name type="common">FHV</name>
    <dbReference type="NCBI Taxonomy" id="12287"/>
    <lineage>
        <taxon>Viruses</taxon>
        <taxon>Riboviria</taxon>
        <taxon>Orthornavirae</taxon>
        <taxon>Kitrinoviricota</taxon>
        <taxon>Magsaviricetes</taxon>
        <taxon>Nodamuvirales</taxon>
        <taxon>Nodaviridae</taxon>
        <taxon>Alphanodavirus</taxon>
    </lineage>
</organism>
<sequence>MTLKVILGEHQITRTELLVGIATVSGCGAVVYCISKFWGYGAIAPYPQSGGNRVTRALQRAVIDKTKTPIETRFYPLDSLRTVTPKRVADNGHAVSGAVRDAARRLIDESITAVGGSKFEVNPNPNSSTGLRNHFHFAVGDLAQDFRNDTPADDAFIVGVDVDYYVTEPDVLLEHMRPVVLHTFNPKKVSGFDADSPFTIKNNLVEYKVSGGAAWVHPVWDWCEAGEFIASRVRTSWKEWFLQLPLRMIGLEKVGYHKIHHCRPWTDCPDRALVYTIPQYVIWRFNWIDTELHVRKLKRIEYQDETKPGWNRLEYVTDKNELLVSIGREGEHAQITIEKEKLDMLSGLSATQSVNARLIGMGHKDPQYTSMIVQYYTGKKVVSPISPTVYKPTMPRVHWPVTSDADVPEVSARQYTLPIVSDCMMMPMIKRWETMSESIERRVTFVANDKKPSDRIAKIAETFVKLMNGPFKDLDPLSIEETIERLNKPSQQLQLRAVFEMIGVKPRQLIESFNKNEPGMKSSRIISGFPDILFILKVSRYTLAYSDIVLHAEHNEHWYYPGRNPTEIADGVCEFVSDCDAEVIETDFSNLDGRVSSWMQRNIAQKAMVQAFRPEYRDEIISFMDTIINCPAKAKRFGFRYEPGVGVKSGSPTTTPHNTQYNGCVEFTALTFEHPDAEPEDLFRLIGPKCGDDGLSRAIIQKSINRAAKCFGLELKVERYNPEIGLCFLSRVFVDPLATTTTIQDPLRTLRKLHLTTRDPTIPLADAACDRVEGYLCTDALTPLISDYCKMVLRLYGPTASTEQVRNQRRSRNKEKPYWLTCDGSWPQHPQDAHLMKQVLIKRTAIDEDQVDALIGRFAAMKDVWEKITHDSEESAAACTFDEDGVAPNSVDESLPMLNDAKQTRANPGTSRPHSNGGGSSHGNELPRRTEQRAQGPRQPARLPKQGKTNGKSDGNITAGETQRGGIPRGKGPRGGKTNTRRTPPKAGAQPQPSNNRK</sequence>
<evidence type="ECO:0000256" key="1">
    <source>
        <dbReference type="SAM" id="MobiDB-lite"/>
    </source>
</evidence>
<evidence type="ECO:0000269" key="2">
    <source>
    </source>
</evidence>
<evidence type="ECO:0000269" key="3">
    <source>
    </source>
</evidence>
<evidence type="ECO:0000269" key="4">
    <source>
    </source>
</evidence>
<evidence type="ECO:0000269" key="5">
    <source>
    </source>
</evidence>
<evidence type="ECO:0000269" key="6">
    <source>
    </source>
</evidence>
<evidence type="ECO:0000269" key="7">
    <source>
    </source>
</evidence>
<evidence type="ECO:0000269" key="8">
    <source>
    </source>
</evidence>
<evidence type="ECO:0000303" key="9">
    <source>
    </source>
</evidence>
<evidence type="ECO:0000305" key="10"/>
<evidence type="ECO:0000305" key="11">
    <source>
    </source>
</evidence>
<evidence type="ECO:0000305" key="12">
    <source>
    </source>
</evidence>
<evidence type="ECO:0000305" key="13">
    <source>
    </source>
</evidence>
<evidence type="ECO:0007829" key="14">
    <source>
        <dbReference type="PDB" id="8FM9"/>
    </source>
</evidence>
<evidence type="ECO:0007829" key="15">
    <source>
        <dbReference type="PDB" id="8FMA"/>
    </source>
</evidence>
<keyword id="KW-0002">3D-structure</keyword>
<keyword id="KW-1043">Host membrane</keyword>
<keyword id="KW-1045">Host mitochondrion</keyword>
<keyword id="KW-1047">Host mitochondrion outer membrane</keyword>
<keyword id="KW-0472">Membrane</keyword>
<keyword id="KW-0511">Multifunctional enzyme</keyword>
<keyword id="KW-0548">Nucleotidyltransferase</keyword>
<keyword id="KW-0696">RNA-directed RNA polymerase</keyword>
<keyword id="KW-0808">Transferase</keyword>
<keyword id="KW-0812">Transmembrane</keyword>
<keyword id="KW-1133">Transmembrane helix</keyword>
<protein>
    <recommendedName>
        <fullName>RNA-directed RNA polymerase</fullName>
        <shortName>RdRp</shortName>
        <ecNumber evidence="4">2.7.7.48</ecNumber>
    </recommendedName>
    <alternativeName>
        <fullName>RNA replicase</fullName>
        <shortName>Protein A</shortName>
    </alternativeName>
</protein>
<proteinExistence type="evidence at protein level"/>